<sequence length="566" mass="61228">MAIAIGLDFGSDSVRALAVDCTTGEEIATSVEWYPRWQKGQFCDAPNNQFRHHPRDYIESMEAALKTVLAELSVEQRAAVVGIGVDSTGSTPAPIDADGNVLALRPEFAENPNAMFVLWKDHTAVEEAEEITRLCHAPGNVDYSRYIGGIYSSEWFWAKILHVTRQDSAVAQSAASWIELCDWVPALLSGTTRPQDIRRGRCSAGHKSLWHESWGGLPPASFFDELDPILNRHLPSPLFTDTWTADIPVGTLCPEWAQRLGLPESVVISGGAFDCHMGAVGAGAQPNALVKVIGTSTCDILIADKQSVGERAVKGICGQVDGSVVPGFIGLEAGQSAFGDIYAWFGRVLGWPLEQLAAQHPELKEQIDASQKQLLPALTEAWAKNPSLDHLPVVLDWFNGRRTPNANQRLKGVITDLNLATDAPLLFGGLIAATAFGARAIMECFTDQGIAVNNVMALGGIARKNQVIMQACCDVLNRPLQIVASDQCCALGAAIFAAVAAKVHADIPSAQQKMASAVEKTLQPRSEQAQRFEQLYRRYQQWAMSAEQHYLPTSAPAQAAQAVPTL</sequence>
<protein>
    <recommendedName>
        <fullName evidence="2">Ribulokinase</fullName>
        <ecNumber evidence="2">2.7.1.16</ecNumber>
    </recommendedName>
</protein>
<gene>
    <name evidence="2" type="primary">araB</name>
    <name type="ordered locus">Z0072</name>
    <name type="ordered locus">ECs0067</name>
</gene>
<evidence type="ECO:0000250" key="1"/>
<evidence type="ECO:0000255" key="2">
    <source>
        <dbReference type="HAMAP-Rule" id="MF_00520"/>
    </source>
</evidence>
<accession>P58541</accession>
<keyword id="KW-0054">Arabinose catabolism</keyword>
<keyword id="KW-0067">ATP-binding</keyword>
<keyword id="KW-0119">Carbohydrate metabolism</keyword>
<keyword id="KW-0418">Kinase</keyword>
<keyword id="KW-0547">Nucleotide-binding</keyword>
<keyword id="KW-1185">Reference proteome</keyword>
<keyword id="KW-0808">Transferase</keyword>
<feature type="initiator methionine" description="Removed" evidence="1">
    <location>
        <position position="1"/>
    </location>
</feature>
<feature type="chain" id="PRO_0000198360" description="Ribulokinase">
    <location>
        <begin position="2"/>
        <end position="566"/>
    </location>
</feature>
<proteinExistence type="inferred from homology"/>
<name>ARAB_ECO57</name>
<dbReference type="EC" id="2.7.1.16" evidence="2"/>
<dbReference type="EMBL" id="AE005174">
    <property type="protein sequence ID" value="AAG54367.1"/>
    <property type="molecule type" value="Genomic_DNA"/>
</dbReference>
<dbReference type="EMBL" id="BA000007">
    <property type="protein sequence ID" value="BAB33490.1"/>
    <property type="molecule type" value="Genomic_DNA"/>
</dbReference>
<dbReference type="PIR" id="C85488">
    <property type="entry name" value="C85488"/>
</dbReference>
<dbReference type="PIR" id="C90637">
    <property type="entry name" value="C90637"/>
</dbReference>
<dbReference type="RefSeq" id="NP_308094.1">
    <property type="nucleotide sequence ID" value="NC_002695.1"/>
</dbReference>
<dbReference type="RefSeq" id="WP_000951872.1">
    <property type="nucleotide sequence ID" value="NZ_VOAI01000002.1"/>
</dbReference>
<dbReference type="SMR" id="P58541"/>
<dbReference type="STRING" id="155864.Z0072"/>
<dbReference type="GeneID" id="913471"/>
<dbReference type="KEGG" id="ece:Z0072"/>
<dbReference type="KEGG" id="ecs:ECs_0067"/>
<dbReference type="PATRIC" id="fig|386585.9.peg.167"/>
<dbReference type="eggNOG" id="COG1069">
    <property type="taxonomic scope" value="Bacteria"/>
</dbReference>
<dbReference type="HOGENOM" id="CLU_009281_9_1_6"/>
<dbReference type="OMA" id="HKAMWHE"/>
<dbReference type="UniPathway" id="UPA00145">
    <property type="reaction ID" value="UER00566"/>
</dbReference>
<dbReference type="Proteomes" id="UP000000558">
    <property type="component" value="Chromosome"/>
</dbReference>
<dbReference type="Proteomes" id="UP000002519">
    <property type="component" value="Chromosome"/>
</dbReference>
<dbReference type="GO" id="GO:0005737">
    <property type="term" value="C:cytoplasm"/>
    <property type="evidence" value="ECO:0007669"/>
    <property type="project" value="TreeGrafter"/>
</dbReference>
<dbReference type="GO" id="GO:0005524">
    <property type="term" value="F:ATP binding"/>
    <property type="evidence" value="ECO:0007669"/>
    <property type="project" value="UniProtKB-KW"/>
</dbReference>
<dbReference type="GO" id="GO:0019150">
    <property type="term" value="F:D-ribulokinase activity"/>
    <property type="evidence" value="ECO:0007669"/>
    <property type="project" value="RHEA"/>
</dbReference>
<dbReference type="GO" id="GO:0008741">
    <property type="term" value="F:ribulokinase activity"/>
    <property type="evidence" value="ECO:0007669"/>
    <property type="project" value="UniProtKB-UniRule"/>
</dbReference>
<dbReference type="GO" id="GO:0019569">
    <property type="term" value="P:L-arabinose catabolic process to xylulose 5-phosphate"/>
    <property type="evidence" value="ECO:0007669"/>
    <property type="project" value="UniProtKB-UniRule"/>
</dbReference>
<dbReference type="CDD" id="cd07781">
    <property type="entry name" value="ASKHA_NBD_FGGY_L-RBK"/>
    <property type="match status" value="1"/>
</dbReference>
<dbReference type="Gene3D" id="1.20.58.2240">
    <property type="match status" value="1"/>
</dbReference>
<dbReference type="Gene3D" id="3.30.420.40">
    <property type="match status" value="1"/>
</dbReference>
<dbReference type="HAMAP" id="MF_00520">
    <property type="entry name" value="Ribulokinase"/>
    <property type="match status" value="1"/>
</dbReference>
<dbReference type="InterPro" id="IPR043129">
    <property type="entry name" value="ATPase_NBD"/>
</dbReference>
<dbReference type="InterPro" id="IPR018485">
    <property type="entry name" value="FGGY_C"/>
</dbReference>
<dbReference type="InterPro" id="IPR005929">
    <property type="entry name" value="Ribulokinase"/>
</dbReference>
<dbReference type="NCBIfam" id="TIGR01234">
    <property type="entry name" value="L-ribulokinase"/>
    <property type="match status" value="1"/>
</dbReference>
<dbReference type="NCBIfam" id="NF003154">
    <property type="entry name" value="PRK04123.1"/>
    <property type="match status" value="1"/>
</dbReference>
<dbReference type="PANTHER" id="PTHR43435:SF4">
    <property type="entry name" value="FGGY CARBOHYDRATE KINASE DOMAIN-CONTAINING PROTEIN"/>
    <property type="match status" value="1"/>
</dbReference>
<dbReference type="PANTHER" id="PTHR43435">
    <property type="entry name" value="RIBULOKINASE"/>
    <property type="match status" value="1"/>
</dbReference>
<dbReference type="Pfam" id="PF02782">
    <property type="entry name" value="FGGY_C"/>
    <property type="match status" value="1"/>
</dbReference>
<dbReference type="SUPFAM" id="SSF53067">
    <property type="entry name" value="Actin-like ATPase domain"/>
    <property type="match status" value="2"/>
</dbReference>
<organism>
    <name type="scientific">Escherichia coli O157:H7</name>
    <dbReference type="NCBI Taxonomy" id="83334"/>
    <lineage>
        <taxon>Bacteria</taxon>
        <taxon>Pseudomonadati</taxon>
        <taxon>Pseudomonadota</taxon>
        <taxon>Gammaproteobacteria</taxon>
        <taxon>Enterobacterales</taxon>
        <taxon>Enterobacteriaceae</taxon>
        <taxon>Escherichia</taxon>
    </lineage>
</organism>
<reference key="1">
    <citation type="journal article" date="2001" name="Nature">
        <title>Genome sequence of enterohaemorrhagic Escherichia coli O157:H7.</title>
        <authorList>
            <person name="Perna N.T."/>
            <person name="Plunkett G. III"/>
            <person name="Burland V."/>
            <person name="Mau B."/>
            <person name="Glasner J.D."/>
            <person name="Rose D.J."/>
            <person name="Mayhew G.F."/>
            <person name="Evans P.S."/>
            <person name="Gregor J."/>
            <person name="Kirkpatrick H.A."/>
            <person name="Posfai G."/>
            <person name="Hackett J."/>
            <person name="Klink S."/>
            <person name="Boutin A."/>
            <person name="Shao Y."/>
            <person name="Miller L."/>
            <person name="Grotbeck E.J."/>
            <person name="Davis N.W."/>
            <person name="Lim A."/>
            <person name="Dimalanta E.T."/>
            <person name="Potamousis K."/>
            <person name="Apodaca J."/>
            <person name="Anantharaman T.S."/>
            <person name="Lin J."/>
            <person name="Yen G."/>
            <person name="Schwartz D.C."/>
            <person name="Welch R.A."/>
            <person name="Blattner F.R."/>
        </authorList>
    </citation>
    <scope>NUCLEOTIDE SEQUENCE [LARGE SCALE GENOMIC DNA]</scope>
    <source>
        <strain>O157:H7 / EDL933 / ATCC 700927 / EHEC</strain>
    </source>
</reference>
<reference key="2">
    <citation type="journal article" date="2001" name="DNA Res.">
        <title>Complete genome sequence of enterohemorrhagic Escherichia coli O157:H7 and genomic comparison with a laboratory strain K-12.</title>
        <authorList>
            <person name="Hayashi T."/>
            <person name="Makino K."/>
            <person name="Ohnishi M."/>
            <person name="Kurokawa K."/>
            <person name="Ishii K."/>
            <person name="Yokoyama K."/>
            <person name="Han C.-G."/>
            <person name="Ohtsubo E."/>
            <person name="Nakayama K."/>
            <person name="Murata T."/>
            <person name="Tanaka M."/>
            <person name="Tobe T."/>
            <person name="Iida T."/>
            <person name="Takami H."/>
            <person name="Honda T."/>
            <person name="Sasakawa C."/>
            <person name="Ogasawara N."/>
            <person name="Yasunaga T."/>
            <person name="Kuhara S."/>
            <person name="Shiba T."/>
            <person name="Hattori M."/>
            <person name="Shinagawa H."/>
        </authorList>
    </citation>
    <scope>NUCLEOTIDE SEQUENCE [LARGE SCALE GENOMIC DNA]</scope>
    <source>
        <strain>O157:H7 / Sakai / RIMD 0509952 / EHEC</strain>
    </source>
</reference>
<comment type="catalytic activity">
    <reaction evidence="2">
        <text>D-ribulose + ATP = D-ribulose 5-phosphate + ADP + H(+)</text>
        <dbReference type="Rhea" id="RHEA:17601"/>
        <dbReference type="ChEBI" id="CHEBI:15378"/>
        <dbReference type="ChEBI" id="CHEBI:17173"/>
        <dbReference type="ChEBI" id="CHEBI:30616"/>
        <dbReference type="ChEBI" id="CHEBI:58121"/>
        <dbReference type="ChEBI" id="CHEBI:456216"/>
        <dbReference type="EC" id="2.7.1.16"/>
    </reaction>
</comment>
<comment type="catalytic activity">
    <reaction evidence="2">
        <text>L-ribulose + ATP = L-ribulose 5-phosphate + ADP + H(+)</text>
        <dbReference type="Rhea" id="RHEA:22072"/>
        <dbReference type="ChEBI" id="CHEBI:15378"/>
        <dbReference type="ChEBI" id="CHEBI:16880"/>
        <dbReference type="ChEBI" id="CHEBI:30616"/>
        <dbReference type="ChEBI" id="CHEBI:58226"/>
        <dbReference type="ChEBI" id="CHEBI:456216"/>
        <dbReference type="EC" id="2.7.1.16"/>
    </reaction>
</comment>
<comment type="pathway">
    <text evidence="2">Carbohydrate degradation; L-arabinose degradation via L-ribulose; D-xylulose 5-phosphate from L-arabinose (bacterial route): step 2/3.</text>
</comment>
<comment type="similarity">
    <text evidence="2">Belongs to the ribulokinase family.</text>
</comment>